<proteinExistence type="inferred from homology"/>
<gene>
    <name type="primary">trm61</name>
    <name type="ORF">AO090020000591</name>
</gene>
<evidence type="ECO:0000250" key="1">
    <source>
        <dbReference type="UniProtKB" id="P46959"/>
    </source>
</evidence>
<evidence type="ECO:0000250" key="2">
    <source>
        <dbReference type="UniProtKB" id="Q96FX7"/>
    </source>
</evidence>
<evidence type="ECO:0000255" key="3">
    <source>
        <dbReference type="PROSITE-ProRule" id="PRU00952"/>
    </source>
</evidence>
<evidence type="ECO:0000256" key="4">
    <source>
        <dbReference type="SAM" id="MobiDB-lite"/>
    </source>
</evidence>
<accession>Q2U3W4</accession>
<sequence length="474" mass="53474">MHSPFLTPGSRSQLDNLALLQLRRDQTIPTILQLHDEKNGGYKEGKVTNTRFGSFPHITLCDQPWGSQIIASKVDTGSRGRTQKMKRKADELDSSTQAEDKPSPQTPVAASSGFLHLLYPTPELWTASLPHRTQVVYTPDYSYILHRLRARPGSTVIEAGAGSGSFTHASVRAVFNGYPSDDQPTKKRRLGKVCSFEFHAQRAEKVRVEVNQHGLDGLVEVTHRDVYEDGFLLGDPKTGKSPKANAIFLDLPAPWLALKHLVRNPPEGTESPLDPTSPVYICTFSPCLEQVQRTISTLRQLGWLGISMVEVNNRRIEVKRERVGLDLGNIRGTVVFPKSVDEAVERTRALEERAQLFRATQNQSDGDSTPAPKAENEAKGGQQESEVPVYKQGRVMTRSELDLKNHTSYLVFAILPREWTEEDEKRCREKWPSNRVQEPQGPQKSKKQLKRESREKRDLQRKEQSQPETESQKE</sequence>
<organism>
    <name type="scientific">Aspergillus oryzae (strain ATCC 42149 / RIB 40)</name>
    <name type="common">Yellow koji mold</name>
    <dbReference type="NCBI Taxonomy" id="510516"/>
    <lineage>
        <taxon>Eukaryota</taxon>
        <taxon>Fungi</taxon>
        <taxon>Dikarya</taxon>
        <taxon>Ascomycota</taxon>
        <taxon>Pezizomycotina</taxon>
        <taxon>Eurotiomycetes</taxon>
        <taxon>Eurotiomycetidae</taxon>
        <taxon>Eurotiales</taxon>
        <taxon>Aspergillaceae</taxon>
        <taxon>Aspergillus</taxon>
        <taxon>Aspergillus subgen. Circumdati</taxon>
    </lineage>
</organism>
<feature type="chain" id="PRO_0000256169" description="tRNA (adenine(58)-N(1))-methyltransferase catalytic subunit trm61">
    <location>
        <begin position="1"/>
        <end position="474"/>
    </location>
</feature>
<feature type="region of interest" description="Disordered" evidence="4">
    <location>
        <begin position="75"/>
        <end position="109"/>
    </location>
</feature>
<feature type="region of interest" description="Disordered" evidence="4">
    <location>
        <begin position="356"/>
        <end position="390"/>
    </location>
</feature>
<feature type="region of interest" description="Disordered" evidence="4">
    <location>
        <begin position="423"/>
        <end position="474"/>
    </location>
</feature>
<feature type="compositionally biased region" description="Polar residues" evidence="4">
    <location>
        <begin position="358"/>
        <end position="367"/>
    </location>
</feature>
<feature type="compositionally biased region" description="Basic and acidic residues" evidence="4">
    <location>
        <begin position="423"/>
        <end position="432"/>
    </location>
</feature>
<feature type="compositionally biased region" description="Polar residues" evidence="4">
    <location>
        <begin position="434"/>
        <end position="443"/>
    </location>
</feature>
<feature type="compositionally biased region" description="Basic and acidic residues" evidence="4">
    <location>
        <begin position="450"/>
        <end position="474"/>
    </location>
</feature>
<feature type="binding site" evidence="2">
    <location>
        <begin position="163"/>
        <end position="165"/>
    </location>
    <ligand>
        <name>S-adenosyl-L-methionine</name>
        <dbReference type="ChEBI" id="CHEBI:59789"/>
    </ligand>
</feature>
<feature type="binding site" evidence="2 3">
    <location>
        <position position="197"/>
    </location>
    <ligand>
        <name>S-adenosyl-L-methionine</name>
        <dbReference type="ChEBI" id="CHEBI:59789"/>
    </ligand>
</feature>
<feature type="binding site" evidence="2">
    <location>
        <position position="202"/>
    </location>
    <ligand>
        <name>S-adenosyl-L-methionine</name>
        <dbReference type="ChEBI" id="CHEBI:59789"/>
    </ligand>
</feature>
<feature type="binding site" evidence="2">
    <location>
        <begin position="225"/>
        <end position="226"/>
    </location>
    <ligand>
        <name>S-adenosyl-L-methionine</name>
        <dbReference type="ChEBI" id="CHEBI:59789"/>
    </ligand>
</feature>
<feature type="binding site" evidence="2 3">
    <location>
        <position position="250"/>
    </location>
    <ligand>
        <name>S-adenosyl-L-methionine</name>
        <dbReference type="ChEBI" id="CHEBI:59789"/>
    </ligand>
</feature>
<name>TRM61_ASPOR</name>
<reference key="1">
    <citation type="journal article" date="2005" name="Nature">
        <title>Genome sequencing and analysis of Aspergillus oryzae.</title>
        <authorList>
            <person name="Machida M."/>
            <person name="Asai K."/>
            <person name="Sano M."/>
            <person name="Tanaka T."/>
            <person name="Kumagai T."/>
            <person name="Terai G."/>
            <person name="Kusumoto K."/>
            <person name="Arima T."/>
            <person name="Akita O."/>
            <person name="Kashiwagi Y."/>
            <person name="Abe K."/>
            <person name="Gomi K."/>
            <person name="Horiuchi H."/>
            <person name="Kitamoto K."/>
            <person name="Kobayashi T."/>
            <person name="Takeuchi M."/>
            <person name="Denning D.W."/>
            <person name="Galagan J.E."/>
            <person name="Nierman W.C."/>
            <person name="Yu J."/>
            <person name="Archer D.B."/>
            <person name="Bennett J.W."/>
            <person name="Bhatnagar D."/>
            <person name="Cleveland T.E."/>
            <person name="Fedorova N.D."/>
            <person name="Gotoh O."/>
            <person name="Horikawa H."/>
            <person name="Hosoyama A."/>
            <person name="Ichinomiya M."/>
            <person name="Igarashi R."/>
            <person name="Iwashita K."/>
            <person name="Juvvadi P.R."/>
            <person name="Kato M."/>
            <person name="Kato Y."/>
            <person name="Kin T."/>
            <person name="Kokubun A."/>
            <person name="Maeda H."/>
            <person name="Maeyama N."/>
            <person name="Maruyama J."/>
            <person name="Nagasaki H."/>
            <person name="Nakajima T."/>
            <person name="Oda K."/>
            <person name="Okada K."/>
            <person name="Paulsen I."/>
            <person name="Sakamoto K."/>
            <person name="Sawano T."/>
            <person name="Takahashi M."/>
            <person name="Takase K."/>
            <person name="Terabayashi Y."/>
            <person name="Wortman J.R."/>
            <person name="Yamada O."/>
            <person name="Yamagata Y."/>
            <person name="Anazawa H."/>
            <person name="Hata Y."/>
            <person name="Koide Y."/>
            <person name="Komori T."/>
            <person name="Koyama Y."/>
            <person name="Minetoki T."/>
            <person name="Suharnan S."/>
            <person name="Tanaka A."/>
            <person name="Isono K."/>
            <person name="Kuhara S."/>
            <person name="Ogasawara N."/>
            <person name="Kikuchi H."/>
        </authorList>
    </citation>
    <scope>NUCLEOTIDE SEQUENCE [LARGE SCALE GENOMIC DNA]</scope>
    <source>
        <strain>ATCC 42149 / RIB 40</strain>
    </source>
</reference>
<keyword id="KW-0489">Methyltransferase</keyword>
<keyword id="KW-0539">Nucleus</keyword>
<keyword id="KW-1185">Reference proteome</keyword>
<keyword id="KW-0949">S-adenosyl-L-methionine</keyword>
<keyword id="KW-0808">Transferase</keyword>
<keyword id="KW-0819">tRNA processing</keyword>
<comment type="function">
    <text evidence="1">Catalytic subunit of tRNA (adenine-N(1)-)-methyltransferase, which catalyzes the formation of N(1)-methyladenine at position 58 (m1A58) in initiator methionyl-tRNA.</text>
</comment>
<comment type="catalytic activity">
    <reaction evidence="3">
        <text>adenosine(58) in tRNA + S-adenosyl-L-methionine = N(1)-methyladenosine(58) in tRNA + S-adenosyl-L-homocysteine + H(+)</text>
        <dbReference type="Rhea" id="RHEA:43152"/>
        <dbReference type="Rhea" id="RHEA-COMP:10365"/>
        <dbReference type="Rhea" id="RHEA-COMP:10366"/>
        <dbReference type="ChEBI" id="CHEBI:15378"/>
        <dbReference type="ChEBI" id="CHEBI:57856"/>
        <dbReference type="ChEBI" id="CHEBI:59789"/>
        <dbReference type="ChEBI" id="CHEBI:74411"/>
        <dbReference type="ChEBI" id="CHEBI:74491"/>
        <dbReference type="EC" id="2.1.1.220"/>
    </reaction>
</comment>
<comment type="subunit">
    <text evidence="1">Heterotetramer; composed of two copies of TRM6 and two copies of TRM61.</text>
</comment>
<comment type="subcellular location">
    <subcellularLocation>
        <location evidence="1">Nucleus</location>
    </subcellularLocation>
</comment>
<comment type="similarity">
    <text evidence="3">Belongs to the class I-like SAM-binding methyltransferase superfamily. TRM61 family.</text>
</comment>
<protein>
    <recommendedName>
        <fullName>tRNA (adenine(58)-N(1))-methyltransferase catalytic subunit trm61</fullName>
        <ecNumber>2.1.1.220</ecNumber>
    </recommendedName>
    <alternativeName>
        <fullName>tRNA(m1A58)-methyltransferase subunit trm61</fullName>
        <shortName>tRNA(m1A58)MTase subunit trm61</shortName>
    </alternativeName>
</protein>
<dbReference type="EC" id="2.1.1.220"/>
<dbReference type="EMBL" id="BA000054">
    <property type="protein sequence ID" value="BAE63751.1"/>
    <property type="molecule type" value="Genomic_DNA"/>
</dbReference>
<dbReference type="SMR" id="Q2U3W4"/>
<dbReference type="STRING" id="510516.Q2U3W4"/>
<dbReference type="EnsemblFungi" id="BAE63751">
    <property type="protein sequence ID" value="BAE63751"/>
    <property type="gene ID" value="AO090020000591"/>
</dbReference>
<dbReference type="VEuPathDB" id="FungiDB:AO090020000591"/>
<dbReference type="HOGENOM" id="CLU_025402_2_0_1"/>
<dbReference type="OMA" id="IGQPWGS"/>
<dbReference type="Proteomes" id="UP000006564">
    <property type="component" value="Chromosome 6"/>
</dbReference>
<dbReference type="GO" id="GO:0005634">
    <property type="term" value="C:nucleus"/>
    <property type="evidence" value="ECO:0007669"/>
    <property type="project" value="UniProtKB-SubCell"/>
</dbReference>
<dbReference type="GO" id="GO:0031515">
    <property type="term" value="C:tRNA (m1A) methyltransferase complex"/>
    <property type="evidence" value="ECO:0007669"/>
    <property type="project" value="InterPro"/>
</dbReference>
<dbReference type="GO" id="GO:0160107">
    <property type="term" value="F:tRNA (adenine(58)-N1)-methyltransferase activity"/>
    <property type="evidence" value="ECO:0007669"/>
    <property type="project" value="UniProtKB-EC"/>
</dbReference>
<dbReference type="GO" id="GO:0030488">
    <property type="term" value="P:tRNA methylation"/>
    <property type="evidence" value="ECO:0007669"/>
    <property type="project" value="InterPro"/>
</dbReference>
<dbReference type="FunFam" id="3.40.50.150:FF:000189">
    <property type="entry name" value="tRNA (adenine(58)-N(1))-methyltransferase catalytic subunit TRM61"/>
    <property type="match status" value="1"/>
</dbReference>
<dbReference type="Gene3D" id="3.10.330.20">
    <property type="match status" value="1"/>
</dbReference>
<dbReference type="Gene3D" id="3.40.50.150">
    <property type="entry name" value="Vaccinia Virus protein VP39"/>
    <property type="match status" value="1"/>
</dbReference>
<dbReference type="InterPro" id="IPR029063">
    <property type="entry name" value="SAM-dependent_MTases_sf"/>
</dbReference>
<dbReference type="InterPro" id="IPR049470">
    <property type="entry name" value="TRM61_C"/>
</dbReference>
<dbReference type="InterPro" id="IPR014816">
    <property type="entry name" value="tRNA_MeTrfase_Gcd14"/>
</dbReference>
<dbReference type="PANTHER" id="PTHR12133">
    <property type="entry name" value="TRNA (ADENINE(58)-N(1))-METHYLTRANSFERASE"/>
    <property type="match status" value="1"/>
</dbReference>
<dbReference type="PANTHER" id="PTHR12133:SF2">
    <property type="entry name" value="TRNA (ADENINE(58)-N(1))-METHYLTRANSFERASE CATALYTIC SUBUNIT TRMT61A"/>
    <property type="match status" value="1"/>
</dbReference>
<dbReference type="Pfam" id="PF08704">
    <property type="entry name" value="GCD14"/>
    <property type="match status" value="1"/>
</dbReference>
<dbReference type="SUPFAM" id="SSF53335">
    <property type="entry name" value="S-adenosyl-L-methionine-dependent methyltransferases"/>
    <property type="match status" value="1"/>
</dbReference>
<dbReference type="PROSITE" id="PS51620">
    <property type="entry name" value="SAM_TRM61"/>
    <property type="match status" value="1"/>
</dbReference>